<feature type="chain" id="PRO_0000120273" description="Probable Brix domain-containing ribosomal biogenesis protein">
    <location>
        <begin position="1"/>
        <end position="164"/>
    </location>
</feature>
<feature type="domain" description="Brix" evidence="1">
    <location>
        <begin position="1"/>
        <end position="164"/>
    </location>
</feature>
<reference key="1">
    <citation type="journal article" date="2004" name="J. Bacteriol.">
        <title>Complete genome sequence of the genetically tractable hydrogenotrophic methanogen Methanococcus maripaludis.</title>
        <authorList>
            <person name="Hendrickson E.L."/>
            <person name="Kaul R."/>
            <person name="Zhou Y."/>
            <person name="Bovee D."/>
            <person name="Chapman P."/>
            <person name="Chung J."/>
            <person name="Conway de Macario E."/>
            <person name="Dodsworth J.A."/>
            <person name="Gillett W."/>
            <person name="Graham D.E."/>
            <person name="Hackett M."/>
            <person name="Haydock A.K."/>
            <person name="Kang A."/>
            <person name="Land M.L."/>
            <person name="Levy R."/>
            <person name="Lie T.J."/>
            <person name="Major T.A."/>
            <person name="Moore B.C."/>
            <person name="Porat I."/>
            <person name="Palmeiri A."/>
            <person name="Rouse G."/>
            <person name="Saenphimmachak C."/>
            <person name="Soell D."/>
            <person name="Van Dien S."/>
            <person name="Wang T."/>
            <person name="Whitman W.B."/>
            <person name="Xia Q."/>
            <person name="Zhang Y."/>
            <person name="Larimer F.W."/>
            <person name="Olson M.V."/>
            <person name="Leigh J.A."/>
        </authorList>
    </citation>
    <scope>NUCLEOTIDE SEQUENCE [LARGE SCALE GENOMIC DNA]</scope>
    <source>
        <strain>DSM 14266 / JCM 13030 / NBRC 101832 / S2 / LL</strain>
    </source>
</reference>
<evidence type="ECO:0000255" key="1">
    <source>
        <dbReference type="HAMAP-Rule" id="MF_00699"/>
    </source>
</evidence>
<keyword id="KW-1185">Reference proteome</keyword>
<keyword id="KW-0690">Ribosome biogenesis</keyword>
<protein>
    <recommendedName>
        <fullName evidence="1">Probable Brix domain-containing ribosomal biogenesis protein</fullName>
    </recommendedName>
</protein>
<name>BRIX_METMP</name>
<organism>
    <name type="scientific">Methanococcus maripaludis (strain DSM 14266 / JCM 13030 / NBRC 101832 / S2 / LL)</name>
    <dbReference type="NCBI Taxonomy" id="267377"/>
    <lineage>
        <taxon>Archaea</taxon>
        <taxon>Methanobacteriati</taxon>
        <taxon>Methanobacteriota</taxon>
        <taxon>Methanomada group</taxon>
        <taxon>Methanococci</taxon>
        <taxon>Methanococcales</taxon>
        <taxon>Methanococcaceae</taxon>
        <taxon>Methanococcus</taxon>
    </lineage>
</organism>
<comment type="function">
    <text evidence="1">Probably involved in the biogenesis of the ribosome.</text>
</comment>
<dbReference type="EMBL" id="BX950229">
    <property type="protein sequence ID" value="CAF29803.1"/>
    <property type="molecule type" value="Genomic_DNA"/>
</dbReference>
<dbReference type="RefSeq" id="WP_011170191.1">
    <property type="nucleotide sequence ID" value="NC_005791.1"/>
</dbReference>
<dbReference type="SMR" id="Q6M0M3"/>
<dbReference type="STRING" id="267377.MMP0247"/>
<dbReference type="EnsemblBacteria" id="CAF29803">
    <property type="protein sequence ID" value="CAF29803"/>
    <property type="gene ID" value="MMP0247"/>
</dbReference>
<dbReference type="GeneID" id="2762443"/>
<dbReference type="KEGG" id="mmp:MMP0247"/>
<dbReference type="PATRIC" id="fig|267377.15.peg.250"/>
<dbReference type="eggNOG" id="arCOG03247">
    <property type="taxonomic scope" value="Archaea"/>
</dbReference>
<dbReference type="HOGENOM" id="CLU_107897_1_0_2"/>
<dbReference type="OrthoDB" id="117530at2157"/>
<dbReference type="Proteomes" id="UP000000590">
    <property type="component" value="Chromosome"/>
</dbReference>
<dbReference type="GO" id="GO:0019843">
    <property type="term" value="F:rRNA binding"/>
    <property type="evidence" value="ECO:0007669"/>
    <property type="project" value="InterPro"/>
</dbReference>
<dbReference type="GO" id="GO:0006364">
    <property type="term" value="P:rRNA processing"/>
    <property type="evidence" value="ECO:0007669"/>
    <property type="project" value="InterPro"/>
</dbReference>
<dbReference type="Gene3D" id="3.40.50.10480">
    <property type="entry name" value="Probable brix-domain ribosomal biogenesis protein"/>
    <property type="match status" value="1"/>
</dbReference>
<dbReference type="HAMAP" id="MF_00699">
    <property type="entry name" value="BriX"/>
    <property type="match status" value="1"/>
</dbReference>
<dbReference type="InterPro" id="IPR007109">
    <property type="entry name" value="Brix"/>
</dbReference>
<dbReference type="InterPro" id="IPR023548">
    <property type="entry name" value="Brix_dom_Rbsml_bgen_prot"/>
</dbReference>
<dbReference type="NCBIfam" id="NF002092">
    <property type="entry name" value="PRK00933.1-2"/>
    <property type="match status" value="1"/>
</dbReference>
<dbReference type="SMART" id="SM00879">
    <property type="entry name" value="Brix"/>
    <property type="match status" value="1"/>
</dbReference>
<dbReference type="SUPFAM" id="SSF52954">
    <property type="entry name" value="Class II aaRS ABD-related"/>
    <property type="match status" value="1"/>
</dbReference>
<dbReference type="PROSITE" id="PS50833">
    <property type="entry name" value="BRIX"/>
    <property type="match status" value="1"/>
</dbReference>
<gene>
    <name type="ordered locus">MMP0247</name>
</gene>
<sequence length="164" mass="19071">MIITTSRKPSQRTRSLVNDLARVFNFKILNRGKIPLSELIENKDDMIIVEELKGNPGRLKIFNFENNKILSMNLSLKLQREVSGKAFKNSGKLGSKFDKNTEHLKEFFFEYLFKKLSNYKEENFEVVITFKTVDESTFYIEVHKGSENMGPSLKIKTVKILDIE</sequence>
<accession>Q6M0M3</accession>
<proteinExistence type="inferred from homology"/>